<feature type="chain" id="PRO_1000066911" description="N-acetylmannosamine kinase">
    <location>
        <begin position="1"/>
        <end position="300"/>
    </location>
</feature>
<feature type="binding site" evidence="1">
    <location>
        <begin position="5"/>
        <end position="12"/>
    </location>
    <ligand>
        <name>ATP</name>
        <dbReference type="ChEBI" id="CHEBI:30616"/>
    </ligand>
</feature>
<feature type="binding site" evidence="1">
    <location>
        <begin position="132"/>
        <end position="139"/>
    </location>
    <ligand>
        <name>ATP</name>
        <dbReference type="ChEBI" id="CHEBI:30616"/>
    </ligand>
</feature>
<feature type="binding site" evidence="1">
    <location>
        <position position="156"/>
    </location>
    <ligand>
        <name>Zn(2+)</name>
        <dbReference type="ChEBI" id="CHEBI:29105"/>
    </ligand>
</feature>
<feature type="binding site" evidence="1">
    <location>
        <position position="166"/>
    </location>
    <ligand>
        <name>Zn(2+)</name>
        <dbReference type="ChEBI" id="CHEBI:29105"/>
    </ligand>
</feature>
<feature type="binding site" evidence="1">
    <location>
        <position position="168"/>
    </location>
    <ligand>
        <name>Zn(2+)</name>
        <dbReference type="ChEBI" id="CHEBI:29105"/>
    </ligand>
</feature>
<feature type="binding site" evidence="1">
    <location>
        <position position="173"/>
    </location>
    <ligand>
        <name>Zn(2+)</name>
        <dbReference type="ChEBI" id="CHEBI:29105"/>
    </ligand>
</feature>
<protein>
    <recommendedName>
        <fullName evidence="1">N-acetylmannosamine kinase</fullName>
        <ecNumber evidence="1">2.7.1.60</ecNumber>
    </recommendedName>
    <alternativeName>
        <fullName evidence="1">ManNAc kinase</fullName>
    </alternativeName>
    <alternativeName>
        <fullName evidence="1">N-acetyl-D-mannosamine kinase</fullName>
    </alternativeName>
</protein>
<accession>A5UFU9</accession>
<gene>
    <name evidence="1" type="primary">nanK</name>
    <name type="ordered locus">CGSHiGG_03310</name>
</gene>
<proteinExistence type="inferred from homology"/>
<comment type="function">
    <text evidence="1">Catalyzes the phosphorylation of N-acetylmannosamine (ManNAc) to ManNAc-6-P.</text>
</comment>
<comment type="catalytic activity">
    <reaction evidence="1">
        <text>an N-acyl-D-mannosamine + ATP = an N-acyl-D-mannosamine 6-phosphate + ADP + H(+)</text>
        <dbReference type="Rhea" id="RHEA:23832"/>
        <dbReference type="ChEBI" id="CHEBI:15378"/>
        <dbReference type="ChEBI" id="CHEBI:16062"/>
        <dbReference type="ChEBI" id="CHEBI:30616"/>
        <dbReference type="ChEBI" id="CHEBI:57666"/>
        <dbReference type="ChEBI" id="CHEBI:456216"/>
        <dbReference type="EC" id="2.7.1.60"/>
    </reaction>
</comment>
<comment type="pathway">
    <text evidence="1">Amino-sugar metabolism; N-acetylneuraminate degradation; D-fructose 6-phosphate from N-acetylneuraminate: step 2/5.</text>
</comment>
<comment type="subunit">
    <text evidence="1">Homodimer.</text>
</comment>
<comment type="similarity">
    <text evidence="1">Belongs to the ROK (NagC/XylR) family. NanK subfamily.</text>
</comment>
<name>NANK_HAEIG</name>
<dbReference type="EC" id="2.7.1.60" evidence="1"/>
<dbReference type="EMBL" id="CP000672">
    <property type="protein sequence ID" value="ABQ99654.1"/>
    <property type="molecule type" value="Genomic_DNA"/>
</dbReference>
<dbReference type="SMR" id="A5UFU9"/>
<dbReference type="KEGG" id="hiq:CGSHiGG_03310"/>
<dbReference type="HOGENOM" id="CLU_036604_0_4_6"/>
<dbReference type="UniPathway" id="UPA00629">
    <property type="reaction ID" value="UER00681"/>
</dbReference>
<dbReference type="Proteomes" id="UP000001990">
    <property type="component" value="Chromosome"/>
</dbReference>
<dbReference type="GO" id="GO:0005524">
    <property type="term" value="F:ATP binding"/>
    <property type="evidence" value="ECO:0007669"/>
    <property type="project" value="UniProtKB-UniRule"/>
</dbReference>
<dbReference type="GO" id="GO:0009384">
    <property type="term" value="F:N-acylmannosamine kinase activity"/>
    <property type="evidence" value="ECO:0007669"/>
    <property type="project" value="UniProtKB-UniRule"/>
</dbReference>
<dbReference type="GO" id="GO:0008270">
    <property type="term" value="F:zinc ion binding"/>
    <property type="evidence" value="ECO:0007669"/>
    <property type="project" value="UniProtKB-UniRule"/>
</dbReference>
<dbReference type="GO" id="GO:0019262">
    <property type="term" value="P:N-acetylneuraminate catabolic process"/>
    <property type="evidence" value="ECO:0007669"/>
    <property type="project" value="UniProtKB-UniRule"/>
</dbReference>
<dbReference type="CDD" id="cd24069">
    <property type="entry name" value="ASKHA_NBD_ROK_EcNanK-like"/>
    <property type="match status" value="1"/>
</dbReference>
<dbReference type="FunFam" id="3.30.420.40:FF:000063">
    <property type="entry name" value="N-acetylmannosamine kinase"/>
    <property type="match status" value="1"/>
</dbReference>
<dbReference type="Gene3D" id="3.30.420.40">
    <property type="match status" value="2"/>
</dbReference>
<dbReference type="HAMAP" id="MF_01234">
    <property type="entry name" value="ManNAc_kinase"/>
    <property type="match status" value="1"/>
</dbReference>
<dbReference type="InterPro" id="IPR043129">
    <property type="entry name" value="ATPase_NBD"/>
</dbReference>
<dbReference type="InterPro" id="IPR023945">
    <property type="entry name" value="ManNAc_kinase_bac"/>
</dbReference>
<dbReference type="InterPro" id="IPR000600">
    <property type="entry name" value="ROK"/>
</dbReference>
<dbReference type="InterPro" id="IPR049874">
    <property type="entry name" value="ROK_cs"/>
</dbReference>
<dbReference type="NCBIfam" id="NF003461">
    <property type="entry name" value="PRK05082.1"/>
    <property type="match status" value="1"/>
</dbReference>
<dbReference type="PANTHER" id="PTHR18964:SF169">
    <property type="entry name" value="N-ACETYLMANNOSAMINE KINASE"/>
    <property type="match status" value="1"/>
</dbReference>
<dbReference type="PANTHER" id="PTHR18964">
    <property type="entry name" value="ROK (REPRESSOR, ORF, KINASE) FAMILY"/>
    <property type="match status" value="1"/>
</dbReference>
<dbReference type="Pfam" id="PF00480">
    <property type="entry name" value="ROK"/>
    <property type="match status" value="1"/>
</dbReference>
<dbReference type="SUPFAM" id="SSF53067">
    <property type="entry name" value="Actin-like ATPase domain"/>
    <property type="match status" value="1"/>
</dbReference>
<dbReference type="PROSITE" id="PS01125">
    <property type="entry name" value="ROK"/>
    <property type="match status" value="1"/>
</dbReference>
<evidence type="ECO:0000255" key="1">
    <source>
        <dbReference type="HAMAP-Rule" id="MF_01234"/>
    </source>
</evidence>
<keyword id="KW-0067">ATP-binding</keyword>
<keyword id="KW-0119">Carbohydrate metabolism</keyword>
<keyword id="KW-0418">Kinase</keyword>
<keyword id="KW-0479">Metal-binding</keyword>
<keyword id="KW-0547">Nucleotide-binding</keyword>
<keyword id="KW-0808">Transferase</keyword>
<keyword id="KW-0862">Zinc</keyword>
<sequence>MRCLALDIGGTKIAAAIVKNGEIEQRQQIHTPRENVVEGMHQALGKLLADYEGQFDYVAVASTGIINNGILSALNPKNLGGLAEFPLKASIAKHTDKPIGLLNDAQAATYAEYQLQNSEQVSNFVFITVSTGVGGGIVLNQILQTGSRGIAGHIGHTLADPNGAICGCGRRGCVEAIASGRAIEAVSSQWEEPCDPKEVFERFRKNDEKATALVERSAKAIANLIADLVISLDIQKIAIGGSVGLAEGYLPLVEKYLQDFPSIYCCEIESAKFGQDAGLIGAAYWVKDVLLDKPEGTIYG</sequence>
<reference key="1">
    <citation type="journal article" date="2007" name="Genome Biol.">
        <title>Characterization and modeling of the Haemophilus influenzae core and supragenomes based on the complete genomic sequences of Rd and 12 clinical nontypeable strains.</title>
        <authorList>
            <person name="Hogg J.S."/>
            <person name="Hu F.Z."/>
            <person name="Janto B."/>
            <person name="Boissy R."/>
            <person name="Hayes J."/>
            <person name="Keefe R."/>
            <person name="Post J.C."/>
            <person name="Ehrlich G.D."/>
        </authorList>
    </citation>
    <scope>NUCLEOTIDE SEQUENCE [LARGE SCALE GENOMIC DNA]</scope>
    <source>
        <strain>PittGG</strain>
    </source>
</reference>
<organism>
    <name type="scientific">Haemophilus influenzae (strain PittGG)</name>
    <dbReference type="NCBI Taxonomy" id="374931"/>
    <lineage>
        <taxon>Bacteria</taxon>
        <taxon>Pseudomonadati</taxon>
        <taxon>Pseudomonadota</taxon>
        <taxon>Gammaproteobacteria</taxon>
        <taxon>Pasteurellales</taxon>
        <taxon>Pasteurellaceae</taxon>
        <taxon>Haemophilus</taxon>
    </lineage>
</organism>